<sequence>MGRISGLVPSRFLTLLAHLVVVITLFWSRESNIQACLPLKFTPEEYEKQDNQLVAALCLTLGLFAVELAGFLSGVSMFNSTQSLLSIAAHCSASVALSFFVFERWECTTYWYIFTFCSAFPAVTETALFIAVFGLKKKPF</sequence>
<reference key="1">
    <citation type="journal article" date="2005" name="Science">
        <title>The transcriptional landscape of the mammalian genome.</title>
        <authorList>
            <person name="Carninci P."/>
            <person name="Kasukawa T."/>
            <person name="Katayama S."/>
            <person name="Gough J."/>
            <person name="Frith M.C."/>
            <person name="Maeda N."/>
            <person name="Oyama R."/>
            <person name="Ravasi T."/>
            <person name="Lenhard B."/>
            <person name="Wells C."/>
            <person name="Kodzius R."/>
            <person name="Shimokawa K."/>
            <person name="Bajic V.B."/>
            <person name="Brenner S.E."/>
            <person name="Batalov S."/>
            <person name="Forrest A.R."/>
            <person name="Zavolan M."/>
            <person name="Davis M.J."/>
            <person name="Wilming L.G."/>
            <person name="Aidinis V."/>
            <person name="Allen J.E."/>
            <person name="Ambesi-Impiombato A."/>
            <person name="Apweiler R."/>
            <person name="Aturaliya R.N."/>
            <person name="Bailey T.L."/>
            <person name="Bansal M."/>
            <person name="Baxter L."/>
            <person name="Beisel K.W."/>
            <person name="Bersano T."/>
            <person name="Bono H."/>
            <person name="Chalk A.M."/>
            <person name="Chiu K.P."/>
            <person name="Choudhary V."/>
            <person name="Christoffels A."/>
            <person name="Clutterbuck D.R."/>
            <person name="Crowe M.L."/>
            <person name="Dalla E."/>
            <person name="Dalrymple B.P."/>
            <person name="de Bono B."/>
            <person name="Della Gatta G."/>
            <person name="di Bernardo D."/>
            <person name="Down T."/>
            <person name="Engstrom P."/>
            <person name="Fagiolini M."/>
            <person name="Faulkner G."/>
            <person name="Fletcher C.F."/>
            <person name="Fukushima T."/>
            <person name="Furuno M."/>
            <person name="Futaki S."/>
            <person name="Gariboldi M."/>
            <person name="Georgii-Hemming P."/>
            <person name="Gingeras T.R."/>
            <person name="Gojobori T."/>
            <person name="Green R.E."/>
            <person name="Gustincich S."/>
            <person name="Harbers M."/>
            <person name="Hayashi Y."/>
            <person name="Hensch T.K."/>
            <person name="Hirokawa N."/>
            <person name="Hill D."/>
            <person name="Huminiecki L."/>
            <person name="Iacono M."/>
            <person name="Ikeo K."/>
            <person name="Iwama A."/>
            <person name="Ishikawa T."/>
            <person name="Jakt M."/>
            <person name="Kanapin A."/>
            <person name="Katoh M."/>
            <person name="Kawasawa Y."/>
            <person name="Kelso J."/>
            <person name="Kitamura H."/>
            <person name="Kitano H."/>
            <person name="Kollias G."/>
            <person name="Krishnan S.P."/>
            <person name="Kruger A."/>
            <person name="Kummerfeld S.K."/>
            <person name="Kurochkin I.V."/>
            <person name="Lareau L.F."/>
            <person name="Lazarevic D."/>
            <person name="Lipovich L."/>
            <person name="Liu J."/>
            <person name="Liuni S."/>
            <person name="McWilliam S."/>
            <person name="Madan Babu M."/>
            <person name="Madera M."/>
            <person name="Marchionni L."/>
            <person name="Matsuda H."/>
            <person name="Matsuzawa S."/>
            <person name="Miki H."/>
            <person name="Mignone F."/>
            <person name="Miyake S."/>
            <person name="Morris K."/>
            <person name="Mottagui-Tabar S."/>
            <person name="Mulder N."/>
            <person name="Nakano N."/>
            <person name="Nakauchi H."/>
            <person name="Ng P."/>
            <person name="Nilsson R."/>
            <person name="Nishiguchi S."/>
            <person name="Nishikawa S."/>
            <person name="Nori F."/>
            <person name="Ohara O."/>
            <person name="Okazaki Y."/>
            <person name="Orlando V."/>
            <person name="Pang K.C."/>
            <person name="Pavan W.J."/>
            <person name="Pavesi G."/>
            <person name="Pesole G."/>
            <person name="Petrovsky N."/>
            <person name="Piazza S."/>
            <person name="Reed J."/>
            <person name="Reid J.F."/>
            <person name="Ring B.Z."/>
            <person name="Ringwald M."/>
            <person name="Rost B."/>
            <person name="Ruan Y."/>
            <person name="Salzberg S.L."/>
            <person name="Sandelin A."/>
            <person name="Schneider C."/>
            <person name="Schoenbach C."/>
            <person name="Sekiguchi K."/>
            <person name="Semple C.A."/>
            <person name="Seno S."/>
            <person name="Sessa L."/>
            <person name="Sheng Y."/>
            <person name="Shibata Y."/>
            <person name="Shimada H."/>
            <person name="Shimada K."/>
            <person name="Silva D."/>
            <person name="Sinclair B."/>
            <person name="Sperling S."/>
            <person name="Stupka E."/>
            <person name="Sugiura K."/>
            <person name="Sultana R."/>
            <person name="Takenaka Y."/>
            <person name="Taki K."/>
            <person name="Tammoja K."/>
            <person name="Tan S.L."/>
            <person name="Tang S."/>
            <person name="Taylor M.S."/>
            <person name="Tegner J."/>
            <person name="Teichmann S.A."/>
            <person name="Ueda H.R."/>
            <person name="van Nimwegen E."/>
            <person name="Verardo R."/>
            <person name="Wei C.L."/>
            <person name="Yagi K."/>
            <person name="Yamanishi H."/>
            <person name="Zabarovsky E."/>
            <person name="Zhu S."/>
            <person name="Zimmer A."/>
            <person name="Hide W."/>
            <person name="Bult C."/>
            <person name="Grimmond S.M."/>
            <person name="Teasdale R.D."/>
            <person name="Liu E.T."/>
            <person name="Brusic V."/>
            <person name="Quackenbush J."/>
            <person name="Wahlestedt C."/>
            <person name="Mattick J.S."/>
            <person name="Hume D.A."/>
            <person name="Kai C."/>
            <person name="Sasaki D."/>
            <person name="Tomaru Y."/>
            <person name="Fukuda S."/>
            <person name="Kanamori-Katayama M."/>
            <person name="Suzuki M."/>
            <person name="Aoki J."/>
            <person name="Arakawa T."/>
            <person name="Iida J."/>
            <person name="Imamura K."/>
            <person name="Itoh M."/>
            <person name="Kato T."/>
            <person name="Kawaji H."/>
            <person name="Kawagashira N."/>
            <person name="Kawashima T."/>
            <person name="Kojima M."/>
            <person name="Kondo S."/>
            <person name="Konno H."/>
            <person name="Nakano K."/>
            <person name="Ninomiya N."/>
            <person name="Nishio T."/>
            <person name="Okada M."/>
            <person name="Plessy C."/>
            <person name="Shibata K."/>
            <person name="Shiraki T."/>
            <person name="Suzuki S."/>
            <person name="Tagami M."/>
            <person name="Waki K."/>
            <person name="Watahiki A."/>
            <person name="Okamura-Oho Y."/>
            <person name="Suzuki H."/>
            <person name="Kawai J."/>
            <person name="Hayashizaki Y."/>
        </authorList>
    </citation>
    <scope>NUCLEOTIDE SEQUENCE [LARGE SCALE MRNA] (ISOFORMS 1 AND 2)</scope>
    <source>
        <strain>C57BL/6J</strain>
        <strain>NOD</strain>
        <tissue>Dendritic cell</tissue>
        <tissue>Embryo</tissue>
    </source>
</reference>
<reference key="2">
    <citation type="journal article" date="2009" name="PLoS Biol.">
        <title>Lineage-specific biology revealed by a finished genome assembly of the mouse.</title>
        <authorList>
            <person name="Church D.M."/>
            <person name="Goodstadt L."/>
            <person name="Hillier L.W."/>
            <person name="Zody M.C."/>
            <person name="Goldstein S."/>
            <person name="She X."/>
            <person name="Bult C.J."/>
            <person name="Agarwala R."/>
            <person name="Cherry J.L."/>
            <person name="DiCuccio M."/>
            <person name="Hlavina W."/>
            <person name="Kapustin Y."/>
            <person name="Meric P."/>
            <person name="Maglott D."/>
            <person name="Birtle Z."/>
            <person name="Marques A.C."/>
            <person name="Graves T."/>
            <person name="Zhou S."/>
            <person name="Teague B."/>
            <person name="Potamousis K."/>
            <person name="Churas C."/>
            <person name="Place M."/>
            <person name="Herschleb J."/>
            <person name="Runnheim R."/>
            <person name="Forrest D."/>
            <person name="Amos-Landgraf J."/>
            <person name="Schwartz D.C."/>
            <person name="Cheng Z."/>
            <person name="Lindblad-Toh K."/>
            <person name="Eichler E.E."/>
            <person name="Ponting C.P."/>
        </authorList>
    </citation>
    <scope>NUCLEOTIDE SEQUENCE [LARGE SCALE GENOMIC DNA]</scope>
    <source>
        <strain>C57BL/6J</strain>
    </source>
</reference>
<reference key="3">
    <citation type="journal article" date="2004" name="Genome Res.">
        <title>The status, quality, and expansion of the NIH full-length cDNA project: the Mammalian Gene Collection (MGC).</title>
        <authorList>
            <consortium name="The MGC Project Team"/>
        </authorList>
    </citation>
    <scope>NUCLEOTIDE SEQUENCE [LARGE SCALE MRNA] (ISOFORM 2)</scope>
    <source>
        <strain>C57BL/6J</strain>
        <tissue>Brain</tissue>
        <tissue>Thymus</tissue>
    </source>
</reference>
<reference key="4">
    <citation type="journal article" date="2012" name="Dev. Biol.">
        <title>Forward genetics uncovers Transmembrane protein 107 as a novel factor required for ciliogenesis and Sonic hedgehog signaling.</title>
        <authorList>
            <person name="Christopher K.J."/>
            <person name="Wang B."/>
            <person name="Kong Y."/>
            <person name="Weatherbee S.D."/>
        </authorList>
    </citation>
    <scope>FUNCTION</scope>
    <scope>INVOLVEMENT IN SCHLEI</scope>
    <scope>VARIANT SCHLEI GLY-125</scope>
</reference>
<reference key="5">
    <citation type="journal article" date="2016" name="Hum. Mutat.">
        <title>TMEM107 Is a Critical Regulator of Ciliary Protein Composition and Is Mutated in Orofaciodigital Syndrome.</title>
        <authorList>
            <person name="Shylo N.A."/>
            <person name="Christopher K.J."/>
            <person name="Iglesias A."/>
            <person name="Daluiski A."/>
            <person name="Weatherbee S.D."/>
        </authorList>
    </citation>
    <scope>FUNCTION</scope>
    <scope>SUBCELLULAR LOCATION</scope>
    <scope>CHARACTERIZATION OF VARIANT SCHLEI GLY-125</scope>
</reference>
<reference key="6">
    <citation type="journal article" date="2016" name="Nat. Cell Biol.">
        <title>TMEM107 recruits ciliopathy proteins to subdomains of the ciliary transition zone and causes Joubert syndrome.</title>
        <authorList>
            <person name="Lambacher N.J."/>
            <person name="Bruel A.L."/>
            <person name="van Dam T.J."/>
            <person name="Szymanska K."/>
            <person name="Slaats G.G."/>
            <person name="Kuhns S."/>
            <person name="McManus G.J."/>
            <person name="Kennedy J.E."/>
            <person name="Gaff K."/>
            <person name="Wu K.M."/>
            <person name="van der Lee R."/>
            <person name="Burglen L."/>
            <person name="Doummar D."/>
            <person name="Riviere J.B."/>
            <person name="Faivre L."/>
            <person name="Attie-Bitach T."/>
            <person name="Saunier S."/>
            <person name="Curd A."/>
            <person name="Peckham M."/>
            <person name="Giles R.H."/>
            <person name="Johnson C.A."/>
            <person name="Huynen M.A."/>
            <person name="Thauvin-Robinet C."/>
            <person name="Blacque O.E."/>
        </authorList>
    </citation>
    <scope>FUNCTION</scope>
</reference>
<evidence type="ECO:0000250" key="1">
    <source>
        <dbReference type="UniProtKB" id="Q6UX40"/>
    </source>
</evidence>
<evidence type="ECO:0000255" key="2"/>
<evidence type="ECO:0000269" key="3">
    <source>
    </source>
</evidence>
<evidence type="ECO:0000269" key="4">
    <source>
    </source>
</evidence>
<evidence type="ECO:0000269" key="5">
    <source>
    </source>
</evidence>
<evidence type="ECO:0000303" key="6">
    <source>
    </source>
</evidence>
<evidence type="ECO:0000303" key="7">
    <source>
    </source>
</evidence>
<evidence type="ECO:0000305" key="8"/>
<evidence type="ECO:0000312" key="9">
    <source>
        <dbReference type="MGI" id="MGI:1914160"/>
    </source>
</evidence>
<accession>Q9CPV0</accession>
<accession>B2RPS9</accession>
<accession>Q5SUQ6</accession>
<accession>Q9CZ71</accession>
<feature type="chain" id="PRO_0000254542" description="Transmembrane protein 107">
    <location>
        <begin position="1"/>
        <end position="140"/>
    </location>
</feature>
<feature type="transmembrane region" description="Helical" evidence="2">
    <location>
        <begin position="7"/>
        <end position="27"/>
    </location>
</feature>
<feature type="transmembrane region" description="Helical" evidence="2">
    <location>
        <begin position="53"/>
        <end position="73"/>
    </location>
</feature>
<feature type="transmembrane region" description="Helical" evidence="2">
    <location>
        <begin position="83"/>
        <end position="103"/>
    </location>
</feature>
<feature type="transmembrane region" description="Helical" evidence="2">
    <location>
        <begin position="113"/>
        <end position="133"/>
    </location>
</feature>
<feature type="glycosylation site" description="N-linked (GlcNAc...) asparagine" evidence="2">
    <location>
        <position position="79"/>
    </location>
</feature>
<feature type="splice variant" id="VSP_021214" description="In isoform 2." evidence="6 7">
    <original>SAFPAVTETALFIAVFGLKKKPF</original>
    <variation>RCPSTQYFGMGGGGGKSIPNLKVSPT</variation>
    <location>
        <begin position="118"/>
        <end position="140"/>
    </location>
</feature>
<feature type="sequence variant" description="In Schlei; decreases cilium assembly; loss of protein localization to cilium." evidence="3 4">
    <original>E</original>
    <variation>G</variation>
    <location>
        <position position="125"/>
    </location>
</feature>
<feature type="sequence conflict" description="In Ref. 1; BAB28560." evidence="8" ref="1">
    <original>G</original>
    <variation>R</variation>
    <location>
        <position position="74"/>
    </location>
</feature>
<gene>
    <name evidence="9" type="primary">Tmem107</name>
</gene>
<comment type="function">
    <text evidence="3 4 5">Plays a role in cilia formation and embryonic patterning. Requires for normal Sonic hedgehog (Shh) signaling in the neural tube and acts in combination with GLI2 and GLI3 to pattern ventral and intermediate neuronal cell types. During ciliogenesis regulates the ciliary transition zone localization of some MKS complex proteins (PubMed:26518474, PubMed:26595381).</text>
</comment>
<comment type="subunit">
    <text evidence="1">Part of the tectonic-like complex (also named B9 complex). Interacts with TMEM237, TMEM231, MKS1 and TMEM216.</text>
</comment>
<comment type="subcellular location">
    <subcellularLocation>
        <location evidence="8">Membrane</location>
        <topology evidence="8">Multi-pass membrane protein</topology>
    </subcellularLocation>
    <subcellularLocation>
        <location>Cell projection</location>
        <location>Cilium</location>
    </subcellularLocation>
    <text evidence="4">Localizes at the transition zone, a region between the basal body and the ciliary axoneme.</text>
</comment>
<comment type="alternative products">
    <event type="alternative splicing"/>
    <isoform>
        <id>Q9CPV0-1</id>
        <name>1</name>
        <sequence type="displayed"/>
    </isoform>
    <isoform>
        <id>Q9CPV0-2</id>
        <name>2</name>
        <sequence type="described" ref="VSP_021214"/>
    </isoform>
</comment>
<comment type="disease">
    <text evidence="3">Defect in TMEM107 is the cause of the schlei phenotype. Schlei mice display Shh-related defects including, preaxial polydactyly, exencephaly, and disrupted ventral neural tube patterning. Mice shown decreased numbers of cilia in several developing tissues and organs. However, nodal cilia appear normal in schlei mutants and subsequently, no left-right defects are observed.</text>
</comment>
<name>TM107_MOUSE</name>
<proteinExistence type="evidence at protein level"/>
<keyword id="KW-0025">Alternative splicing</keyword>
<keyword id="KW-0966">Cell projection</keyword>
<keyword id="KW-0970">Cilium biogenesis/degradation</keyword>
<keyword id="KW-0217">Developmental protein</keyword>
<keyword id="KW-0225">Disease variant</keyword>
<keyword id="KW-0325">Glycoprotein</keyword>
<keyword id="KW-0472">Membrane</keyword>
<keyword id="KW-1185">Reference proteome</keyword>
<keyword id="KW-0812">Transmembrane</keyword>
<keyword id="KW-1133">Transmembrane helix</keyword>
<organism>
    <name type="scientific">Mus musculus</name>
    <name type="common">Mouse</name>
    <dbReference type="NCBI Taxonomy" id="10090"/>
    <lineage>
        <taxon>Eukaryota</taxon>
        <taxon>Metazoa</taxon>
        <taxon>Chordata</taxon>
        <taxon>Craniata</taxon>
        <taxon>Vertebrata</taxon>
        <taxon>Euteleostomi</taxon>
        <taxon>Mammalia</taxon>
        <taxon>Eutheria</taxon>
        <taxon>Euarchontoglires</taxon>
        <taxon>Glires</taxon>
        <taxon>Rodentia</taxon>
        <taxon>Myomorpha</taxon>
        <taxon>Muroidea</taxon>
        <taxon>Muridae</taxon>
        <taxon>Murinae</taxon>
        <taxon>Mus</taxon>
        <taxon>Mus</taxon>
    </lineage>
</organism>
<dbReference type="EMBL" id="AK003403">
    <property type="protein sequence ID" value="BAB22768.1"/>
    <property type="molecule type" value="mRNA"/>
</dbReference>
<dbReference type="EMBL" id="AK012938">
    <property type="protein sequence ID" value="BAB28560.1"/>
    <property type="molecule type" value="mRNA"/>
</dbReference>
<dbReference type="EMBL" id="AK154279">
    <property type="protein sequence ID" value="BAE32485.1"/>
    <property type="molecule type" value="mRNA"/>
</dbReference>
<dbReference type="EMBL" id="AL645902">
    <property type="status" value="NOT_ANNOTATED_CDS"/>
    <property type="molecule type" value="Genomic_DNA"/>
</dbReference>
<dbReference type="EMBL" id="BC096686">
    <property type="protein sequence ID" value="AAH96686.1"/>
    <property type="molecule type" value="mRNA"/>
</dbReference>
<dbReference type="EMBL" id="BC120499">
    <property type="protein sequence ID" value="AAI20500.1"/>
    <property type="molecule type" value="mRNA"/>
</dbReference>
<dbReference type="EMBL" id="BC137584">
    <property type="protein sequence ID" value="AAI37585.1"/>
    <property type="molecule type" value="mRNA"/>
</dbReference>
<dbReference type="CCDS" id="CCDS24879.1">
    <molecule id="Q9CPV0-1"/>
</dbReference>
<dbReference type="CCDS" id="CCDS24880.1">
    <molecule id="Q9CPV0-2"/>
</dbReference>
<dbReference type="RefSeq" id="NP_080114.1">
    <molecule id="Q9CPV0-1"/>
    <property type="nucleotide sequence ID" value="NM_025838.3"/>
</dbReference>
<dbReference type="RefSeq" id="NP_082612.2">
    <molecule id="Q9CPV0-2"/>
    <property type="nucleotide sequence ID" value="NM_028336.4"/>
</dbReference>
<dbReference type="FunCoup" id="Q9CPV0">
    <property type="interactions" value="224"/>
</dbReference>
<dbReference type="IntAct" id="Q9CPV0">
    <property type="interactions" value="1"/>
</dbReference>
<dbReference type="STRING" id="10090.ENSMUSP00000091624"/>
<dbReference type="GlyCosmos" id="Q9CPV0">
    <property type="glycosylation" value="1 site, No reported glycans"/>
</dbReference>
<dbReference type="GlyGen" id="Q9CPV0">
    <property type="glycosylation" value="1 site"/>
</dbReference>
<dbReference type="PaxDb" id="10090-ENSMUSP00000091624"/>
<dbReference type="ProteomicsDB" id="259209">
    <molecule id="Q9CPV0-1"/>
</dbReference>
<dbReference type="ProteomicsDB" id="259210">
    <molecule id="Q9CPV0-2"/>
</dbReference>
<dbReference type="Antibodypedia" id="42946">
    <property type="antibodies" value="51 antibodies from 19 providers"/>
</dbReference>
<dbReference type="Ensembl" id="ENSMUST00000075980.12">
    <molecule id="Q9CPV0-1"/>
    <property type="protein sequence ID" value="ENSMUSP00000075363.6"/>
    <property type="gene ID" value="ENSMUSG00000020895.15"/>
</dbReference>
<dbReference type="Ensembl" id="ENSMUST00000094081.5">
    <molecule id="Q9CPV0-2"/>
    <property type="protein sequence ID" value="ENSMUSP00000091624.5"/>
    <property type="gene ID" value="ENSMUSG00000020895.15"/>
</dbReference>
<dbReference type="GeneID" id="66910"/>
<dbReference type="KEGG" id="mmu:66910"/>
<dbReference type="UCSC" id="uc007jpc.2">
    <molecule id="Q9CPV0-1"/>
    <property type="organism name" value="mouse"/>
</dbReference>
<dbReference type="UCSC" id="uc007jpd.2">
    <molecule id="Q9CPV0-2"/>
    <property type="organism name" value="mouse"/>
</dbReference>
<dbReference type="AGR" id="MGI:1914160"/>
<dbReference type="CTD" id="84314"/>
<dbReference type="MGI" id="MGI:1914160">
    <property type="gene designation" value="Tmem107"/>
</dbReference>
<dbReference type="VEuPathDB" id="HostDB:ENSMUSG00000020895"/>
<dbReference type="eggNOG" id="ENOG502RZG7">
    <property type="taxonomic scope" value="Eukaryota"/>
</dbReference>
<dbReference type="GeneTree" id="ENSGT00390000014827"/>
<dbReference type="HOGENOM" id="CLU_127745_0_0_1"/>
<dbReference type="InParanoid" id="Q9CPV0"/>
<dbReference type="OMA" id="VCLKKVP"/>
<dbReference type="OrthoDB" id="36990at9989"/>
<dbReference type="PhylomeDB" id="Q9CPV0"/>
<dbReference type="TreeFam" id="TF328441"/>
<dbReference type="BioGRID-ORCS" id="66910">
    <property type="hits" value="3 hits in 77 CRISPR screens"/>
</dbReference>
<dbReference type="PRO" id="PR:Q9CPV0"/>
<dbReference type="Proteomes" id="UP000000589">
    <property type="component" value="Chromosome 11"/>
</dbReference>
<dbReference type="RNAct" id="Q9CPV0">
    <property type="molecule type" value="protein"/>
</dbReference>
<dbReference type="Bgee" id="ENSMUSG00000020895">
    <property type="expression patterns" value="Expressed in nasal cavity epithelium and 228 other cell types or tissues"/>
</dbReference>
<dbReference type="GO" id="GO:0035869">
    <property type="term" value="C:ciliary transition zone"/>
    <property type="evidence" value="ECO:0000314"/>
    <property type="project" value="UniProtKB"/>
</dbReference>
<dbReference type="GO" id="GO:0016020">
    <property type="term" value="C:membrane"/>
    <property type="evidence" value="ECO:0007669"/>
    <property type="project" value="UniProtKB-SubCell"/>
</dbReference>
<dbReference type="GO" id="GO:0036038">
    <property type="term" value="C:MKS complex"/>
    <property type="evidence" value="ECO:0000250"/>
    <property type="project" value="UniProtKB"/>
</dbReference>
<dbReference type="GO" id="GO:0060271">
    <property type="term" value="P:cilium assembly"/>
    <property type="evidence" value="ECO:0000315"/>
    <property type="project" value="UniProtKB"/>
</dbReference>
<dbReference type="GO" id="GO:0044782">
    <property type="term" value="P:cilium organization"/>
    <property type="evidence" value="ECO:0000315"/>
    <property type="project" value="MGI"/>
</dbReference>
<dbReference type="GO" id="GO:0097094">
    <property type="term" value="P:craniofacial suture morphogenesis"/>
    <property type="evidence" value="ECO:0000315"/>
    <property type="project" value="MGI"/>
</dbReference>
<dbReference type="GO" id="GO:0003127">
    <property type="term" value="P:detection of nodal flow"/>
    <property type="evidence" value="ECO:0000315"/>
    <property type="project" value="MGI"/>
</dbReference>
<dbReference type="GO" id="GO:0007368">
    <property type="term" value="P:determination of left/right symmetry"/>
    <property type="evidence" value="ECO:0000315"/>
    <property type="project" value="MGI"/>
</dbReference>
<dbReference type="GO" id="GO:0042733">
    <property type="term" value="P:embryonic digit morphogenesis"/>
    <property type="evidence" value="ECO:0000315"/>
    <property type="project" value="UniProtKB"/>
</dbReference>
<dbReference type="GO" id="GO:0021532">
    <property type="term" value="P:neural tube patterning"/>
    <property type="evidence" value="ECO:0000315"/>
    <property type="project" value="UniProtKB"/>
</dbReference>
<dbReference type="GO" id="GO:1905515">
    <property type="term" value="P:non-motile cilium assembly"/>
    <property type="evidence" value="ECO:0000315"/>
    <property type="project" value="WormBase"/>
</dbReference>
<dbReference type="GO" id="GO:1904491">
    <property type="term" value="P:protein localization to ciliary transition zone"/>
    <property type="evidence" value="ECO:0000315"/>
    <property type="project" value="WormBase"/>
</dbReference>
<dbReference type="GO" id="GO:0010468">
    <property type="term" value="P:regulation of gene expression"/>
    <property type="evidence" value="ECO:0000315"/>
    <property type="project" value="MGI"/>
</dbReference>
<dbReference type="GO" id="GO:0060021">
    <property type="term" value="P:roof of mouth development"/>
    <property type="evidence" value="ECO:0000315"/>
    <property type="project" value="MGI"/>
</dbReference>
<dbReference type="InterPro" id="IPR029248">
    <property type="entry name" value="TMEM107"/>
</dbReference>
<dbReference type="PANTHER" id="PTHR34341">
    <property type="entry name" value="TRANSMEMBRANE PROTEIN 107"/>
    <property type="match status" value="1"/>
</dbReference>
<dbReference type="PANTHER" id="PTHR34341:SF1">
    <property type="entry name" value="TRANSMEMBRANE PROTEIN 107"/>
    <property type="match status" value="1"/>
</dbReference>
<dbReference type="Pfam" id="PF14995">
    <property type="entry name" value="TMEM107"/>
    <property type="match status" value="1"/>
</dbReference>
<protein>
    <recommendedName>
        <fullName evidence="1">Transmembrane protein 107</fullName>
    </recommendedName>
</protein>